<gene>
    <name evidence="1" type="primary">ftsZ2</name>
    <name type="ordered locus">HVO_0581</name>
</gene>
<protein>
    <recommendedName>
        <fullName evidence="1">Cell division protein FtsZ 2</fullName>
    </recommendedName>
</protein>
<keyword id="KW-0131">Cell cycle</keyword>
<keyword id="KW-0132">Cell division</keyword>
<keyword id="KW-0963">Cytoplasm</keyword>
<keyword id="KW-0342">GTP-binding</keyword>
<keyword id="KW-0547">Nucleotide-binding</keyword>
<keyword id="KW-1185">Reference proteome</keyword>
<keyword id="KW-0717">Septation</keyword>
<accession>D4GSH7</accession>
<feature type="chain" id="PRO_0000414242" description="Cell division protein FtsZ 2">
    <location>
        <begin position="1"/>
        <end position="400"/>
    </location>
</feature>
<feature type="region of interest" description="Disordered" evidence="2">
    <location>
        <begin position="1"/>
        <end position="30"/>
    </location>
</feature>
<feature type="region of interest" description="Disordered" evidence="2">
    <location>
        <begin position="338"/>
        <end position="400"/>
    </location>
</feature>
<feature type="compositionally biased region" description="Basic and acidic residues" evidence="2">
    <location>
        <begin position="1"/>
        <end position="16"/>
    </location>
</feature>
<feature type="compositionally biased region" description="Low complexity" evidence="2">
    <location>
        <begin position="352"/>
        <end position="364"/>
    </location>
</feature>
<feature type="compositionally biased region" description="Polar residues" evidence="2">
    <location>
        <begin position="365"/>
        <end position="382"/>
    </location>
</feature>
<feature type="compositionally biased region" description="Basic and acidic residues" evidence="2">
    <location>
        <begin position="385"/>
        <end position="400"/>
    </location>
</feature>
<feature type="binding site" evidence="1">
    <location>
        <begin position="41"/>
        <end position="45"/>
    </location>
    <ligand>
        <name>GTP</name>
        <dbReference type="ChEBI" id="CHEBI:37565"/>
    </ligand>
</feature>
<feature type="binding site" evidence="1">
    <location>
        <begin position="128"/>
        <end position="130"/>
    </location>
    <ligand>
        <name>GTP</name>
        <dbReference type="ChEBI" id="CHEBI:37565"/>
    </ligand>
</feature>
<feature type="binding site" evidence="1">
    <location>
        <position position="159"/>
    </location>
    <ligand>
        <name>GTP</name>
        <dbReference type="ChEBI" id="CHEBI:37565"/>
    </ligand>
</feature>
<feature type="binding site" evidence="1">
    <location>
        <position position="162"/>
    </location>
    <ligand>
        <name>GTP</name>
        <dbReference type="ChEBI" id="CHEBI:37565"/>
    </ligand>
</feature>
<feature type="binding site" evidence="1">
    <location>
        <position position="205"/>
    </location>
    <ligand>
        <name>GTP</name>
        <dbReference type="ChEBI" id="CHEBI:37565"/>
    </ligand>
</feature>
<feature type="mutagenesis site" description="Defective in cell division inhibiting ring constriction. Is not able to complement the deletion mutant of this gene." evidence="3">
    <original>D</original>
    <variation>A</variation>
    <location>
        <position position="231"/>
    </location>
</feature>
<organism>
    <name type="scientific">Haloferax volcanii (strain ATCC 29605 / DSM 3757 / JCM 8879 / NBRC 14742 / NCIMB 2012 / VKM B-1768 / DS2)</name>
    <name type="common">Halobacterium volcanii</name>
    <dbReference type="NCBI Taxonomy" id="309800"/>
    <lineage>
        <taxon>Archaea</taxon>
        <taxon>Methanobacteriati</taxon>
        <taxon>Methanobacteriota</taxon>
        <taxon>Stenosarchaea group</taxon>
        <taxon>Halobacteria</taxon>
        <taxon>Halobacteriales</taxon>
        <taxon>Haloferacaceae</taxon>
        <taxon>Haloferax</taxon>
    </lineage>
</organism>
<reference key="1">
    <citation type="journal article" date="2010" name="PLoS ONE">
        <title>The complete genome sequence of Haloferax volcanii DS2, a model archaeon.</title>
        <authorList>
            <person name="Hartman A.L."/>
            <person name="Norais C."/>
            <person name="Badger J.H."/>
            <person name="Delmas S."/>
            <person name="Haldenby S."/>
            <person name="Madupu R."/>
            <person name="Robinson J."/>
            <person name="Khouri H."/>
            <person name="Ren Q."/>
            <person name="Lowe T.M."/>
            <person name="Maupin-Furlow J."/>
            <person name="Pohlschroder M."/>
            <person name="Daniels C."/>
            <person name="Pfeiffer F."/>
            <person name="Allers T."/>
            <person name="Eisen J.A."/>
        </authorList>
    </citation>
    <scope>NUCLEOTIDE SEQUENCE [LARGE SCALE GENOMIC DNA]</scope>
    <source>
        <strain>ATCC 29605 / DSM 3757 / JCM 8879 / NBRC 14742 / NCIMB 2012 / VKM B-1768 / DS2</strain>
    </source>
</reference>
<reference key="2">
    <citation type="journal article" date="2021" name="Nat. Commun.">
        <title>The archaeal protein SepF is essential for cell division in Haloferax volcanii.</title>
        <authorList>
            <person name="Nussbaum P."/>
            <person name="Gerstner M."/>
            <person name="Dingethal M."/>
            <person name="Erb C."/>
            <person name="Albers S.V."/>
        </authorList>
    </citation>
    <scope>SUBUNIT</scope>
    <scope>SUBCELLULAR LOCATION</scope>
    <source>
        <strain evidence="6">ATCC 29605 / DSM 3757 / JCM 8879 / NBRC 14742 / NCIMB 2012 / VKM B-1768 / DS2</strain>
    </source>
</reference>
<reference key="3">
    <citation type="journal article" date="2021" name="Nat. Microbiol.">
        <title>Cell division in the archaeon Haloferax volcanii relies on two FtsZ proteins with distinct functions in division ring assembly and constriction.</title>
        <authorList>
            <person name="Liao Y."/>
            <person name="Ithurbide S."/>
            <person name="Evenhuis C."/>
            <person name="Loewe J."/>
            <person name="Duggin I.G."/>
        </authorList>
    </citation>
    <scope>FUNCTION</scope>
    <scope>SUBCELLULAR LOCATION</scope>
    <scope>DISRUPTION PHENOTYPE</scope>
    <scope>MUTAGENESIS OF ASP-231</scope>
    <scope>PHYLOGENETIC ANALYSIS</scope>
    <source>
        <strain evidence="5">ATCC 29605 / DSM 3757 / JCM 8879 / NBRC 14742 / NCIMB 2012 / VKM B-1768 / DS2</strain>
    </source>
</reference>
<proteinExistence type="evidence at protein level"/>
<comment type="function">
    <text evidence="1 3">Essential cell division protein that forms a contractile ring structure (Z ring) at the future cell division site. The regulation of the ring assembly controls the timing and the location of cell division. One of the functions of the FtsZ ring is to recruit other cell division proteins to the septum to produce a new cell wall between the dividing cells. Binds GTP and shows GTPase activity (By similarity). Required for division ring constriction (PubMed:33903747).</text>
</comment>
<comment type="subunit">
    <text evidence="1 4">Homodimer. Polymerizes to form a dynamic ring structure in a strictly GTP-dependent manner. Interacts directly with several other division proteins (By similarity). Interacts with SepF (PubMed:34103513).</text>
</comment>
<comment type="subcellular location">
    <subcellularLocation>
        <location evidence="1 3 4">Cytoplasm</location>
    </subcellularLocation>
    <text evidence="1 3 4">Assembles at midcell at the inner surface of the cytoplasmic membrane.</text>
</comment>
<comment type="disruption phenotype">
    <text evidence="3">Viable, but have fewer colony-forming units compared to wild-type. Cells are very heterogeneously sized and misshapen, and have a notable amount of cellular debris. Loss of cell division. No effect on Z1 ring formation. FtsZ1/FtsZ2 double deletion mutant cells show various division defects, including fragmentation, budding, polar tubulation and fission resulting in DNA-containing particles, which are able to remain viable and propagate without regular cell division.</text>
</comment>
<comment type="similarity">
    <text evidence="1">Belongs to the FtsZ family.</text>
</comment>
<dbReference type="EMBL" id="CP001956">
    <property type="protein sequence ID" value="ADE02657.1"/>
    <property type="molecule type" value="Genomic_DNA"/>
</dbReference>
<dbReference type="RefSeq" id="WP_004044352.1">
    <property type="nucleotide sequence ID" value="NC_013967.1"/>
</dbReference>
<dbReference type="SMR" id="D4GSH7"/>
<dbReference type="STRING" id="309800.HVO_0581"/>
<dbReference type="PaxDb" id="309800-C498_15820"/>
<dbReference type="EnsemblBacteria" id="ADE02657">
    <property type="protein sequence ID" value="ADE02657"/>
    <property type="gene ID" value="HVO_0581"/>
</dbReference>
<dbReference type="GeneID" id="8926446"/>
<dbReference type="KEGG" id="hvo:HVO_0581"/>
<dbReference type="eggNOG" id="arCOG02201">
    <property type="taxonomic scope" value="Archaea"/>
</dbReference>
<dbReference type="HOGENOM" id="CLU_024865_0_1_2"/>
<dbReference type="OrthoDB" id="371908at2157"/>
<dbReference type="Proteomes" id="UP000008243">
    <property type="component" value="Chromosome"/>
</dbReference>
<dbReference type="GO" id="GO:0032153">
    <property type="term" value="C:cell division site"/>
    <property type="evidence" value="ECO:0000305"/>
    <property type="project" value="UniProtKB"/>
</dbReference>
<dbReference type="GO" id="GO:0005737">
    <property type="term" value="C:cytoplasm"/>
    <property type="evidence" value="ECO:0007669"/>
    <property type="project" value="UniProtKB-SubCell"/>
</dbReference>
<dbReference type="GO" id="GO:0098562">
    <property type="term" value="C:cytoplasmic side of membrane"/>
    <property type="evidence" value="ECO:0000314"/>
    <property type="project" value="UniProtKB"/>
</dbReference>
<dbReference type="GO" id="GO:0005525">
    <property type="term" value="F:GTP binding"/>
    <property type="evidence" value="ECO:0007669"/>
    <property type="project" value="UniProtKB-UniRule"/>
</dbReference>
<dbReference type="GO" id="GO:0003924">
    <property type="term" value="F:GTPase activity"/>
    <property type="evidence" value="ECO:0007669"/>
    <property type="project" value="UniProtKB-UniRule"/>
</dbReference>
<dbReference type="GO" id="GO:0051301">
    <property type="term" value="P:cell division"/>
    <property type="evidence" value="ECO:0000315"/>
    <property type="project" value="UniProtKB"/>
</dbReference>
<dbReference type="GO" id="GO:0036213">
    <property type="term" value="P:contractile ring contraction"/>
    <property type="evidence" value="ECO:0000315"/>
    <property type="project" value="UniProtKB"/>
</dbReference>
<dbReference type="GO" id="GO:0043093">
    <property type="term" value="P:FtsZ-dependent cytokinesis"/>
    <property type="evidence" value="ECO:0007669"/>
    <property type="project" value="UniProtKB-UniRule"/>
</dbReference>
<dbReference type="GO" id="GO:0051258">
    <property type="term" value="P:protein polymerization"/>
    <property type="evidence" value="ECO:0007669"/>
    <property type="project" value="UniProtKB-UniRule"/>
</dbReference>
<dbReference type="CDD" id="cd02201">
    <property type="entry name" value="FtsZ_type1"/>
    <property type="match status" value="1"/>
</dbReference>
<dbReference type="FunFam" id="3.30.1330.20:FF:000008">
    <property type="entry name" value="Cell division protein FtsZ"/>
    <property type="match status" value="1"/>
</dbReference>
<dbReference type="FunFam" id="3.40.50.1440:FF:000014">
    <property type="entry name" value="Cell division protein FtsZ"/>
    <property type="match status" value="1"/>
</dbReference>
<dbReference type="Gene3D" id="3.30.1330.20">
    <property type="entry name" value="Tubulin/FtsZ, C-terminal domain"/>
    <property type="match status" value="1"/>
</dbReference>
<dbReference type="Gene3D" id="3.40.50.1440">
    <property type="entry name" value="Tubulin/FtsZ, GTPase domain"/>
    <property type="match status" value="1"/>
</dbReference>
<dbReference type="HAMAP" id="MF_00909">
    <property type="entry name" value="FtsZ"/>
    <property type="match status" value="1"/>
</dbReference>
<dbReference type="InterPro" id="IPR000158">
    <property type="entry name" value="Cell_div_FtsZ"/>
</dbReference>
<dbReference type="InterPro" id="IPR020805">
    <property type="entry name" value="Cell_div_FtsZ_CS"/>
</dbReference>
<dbReference type="InterPro" id="IPR045061">
    <property type="entry name" value="FtsZ/CetZ"/>
</dbReference>
<dbReference type="InterPro" id="IPR024757">
    <property type="entry name" value="FtsZ_C"/>
</dbReference>
<dbReference type="InterPro" id="IPR008280">
    <property type="entry name" value="Tub_FtsZ_C"/>
</dbReference>
<dbReference type="InterPro" id="IPR037103">
    <property type="entry name" value="Tubulin/FtsZ-like_C"/>
</dbReference>
<dbReference type="InterPro" id="IPR018316">
    <property type="entry name" value="Tubulin/FtsZ_2-layer-sand-dom"/>
</dbReference>
<dbReference type="InterPro" id="IPR036525">
    <property type="entry name" value="Tubulin/FtsZ_GTPase_sf"/>
</dbReference>
<dbReference type="InterPro" id="IPR003008">
    <property type="entry name" value="Tubulin_FtsZ_GTPase"/>
</dbReference>
<dbReference type="NCBIfam" id="TIGR00065">
    <property type="entry name" value="ftsZ"/>
    <property type="match status" value="1"/>
</dbReference>
<dbReference type="PANTHER" id="PTHR30314:SF9">
    <property type="entry name" value="CELL DIVISION PROTEIN FTSZ 2"/>
    <property type="match status" value="1"/>
</dbReference>
<dbReference type="PANTHER" id="PTHR30314">
    <property type="entry name" value="CELL DIVISION PROTEIN FTSZ-RELATED"/>
    <property type="match status" value="1"/>
</dbReference>
<dbReference type="Pfam" id="PF12327">
    <property type="entry name" value="FtsZ_C"/>
    <property type="match status" value="1"/>
</dbReference>
<dbReference type="Pfam" id="PF00091">
    <property type="entry name" value="Tubulin"/>
    <property type="match status" value="1"/>
</dbReference>
<dbReference type="PRINTS" id="PR00423">
    <property type="entry name" value="CELLDVISFTSZ"/>
</dbReference>
<dbReference type="SMART" id="SM00864">
    <property type="entry name" value="Tubulin"/>
    <property type="match status" value="1"/>
</dbReference>
<dbReference type="SMART" id="SM00865">
    <property type="entry name" value="Tubulin_C"/>
    <property type="match status" value="1"/>
</dbReference>
<dbReference type="SUPFAM" id="SSF55307">
    <property type="entry name" value="Tubulin C-terminal domain-like"/>
    <property type="match status" value="1"/>
</dbReference>
<dbReference type="SUPFAM" id="SSF52490">
    <property type="entry name" value="Tubulin nucleotide-binding domain-like"/>
    <property type="match status" value="1"/>
</dbReference>
<dbReference type="PROSITE" id="PS01134">
    <property type="entry name" value="FTSZ_1"/>
    <property type="match status" value="1"/>
</dbReference>
<dbReference type="PROSITE" id="PS01135">
    <property type="entry name" value="FTSZ_2"/>
    <property type="match status" value="1"/>
</dbReference>
<name>FTSZ2_HALVD</name>
<evidence type="ECO:0000255" key="1">
    <source>
        <dbReference type="HAMAP-Rule" id="MF_00909"/>
    </source>
</evidence>
<evidence type="ECO:0000256" key="2">
    <source>
        <dbReference type="SAM" id="MobiDB-lite"/>
    </source>
</evidence>
<evidence type="ECO:0000269" key="3">
    <source>
    </source>
</evidence>
<evidence type="ECO:0000269" key="4">
    <source>
    </source>
</evidence>
<evidence type="ECO:0000303" key="5">
    <source>
    </source>
</evidence>
<evidence type="ECO:0000303" key="6">
    <source>
    </source>
</evidence>
<sequence length="400" mass="42570">MQDIVREAMERDEAERQTQSSLEDSDDQFGDPRIVIVGAGGAGNNTINRLYNIGVEGADTVAINTDKQHLKMIEADTKILVGKSLTQGLGAGGDPSMGERATEMAQGTIKDVLGDADLVFVTAGMGGGTGTGAAPVVAKIAKEQGAIVVGMVSTPFNVERARTVKAEEGLENLRNEADSIIVLDNNRLLDYVPNLPIGKAFSVMDQIIAETVKGISETITQPSLINLDYADMSTIMNQGGVAVMLVGETQDKNKTQEVVNDAMNHPLLDVDYRGASGGLVHITGGPDLTLKEAEGIASNITERLEAAANVIWGARIQDEYKGKVRVMAIMTGVQSAQVLGPSTQKQADKSRQSIQSRESQQQHSGSEFDSSERAQTAQSGTWSDGGRDEVEKNNGLDVIR</sequence>